<dbReference type="EMBL" id="BA000049">
    <property type="protein sequence ID" value="BAE55786.1"/>
    <property type="molecule type" value="Genomic_DNA"/>
</dbReference>
<dbReference type="RefSeq" id="XP_001817788.1">
    <property type="nucleotide sequence ID" value="XM_001817736.2"/>
</dbReference>
<dbReference type="SMR" id="Q2URM9"/>
<dbReference type="STRING" id="510516.Q2URM9"/>
<dbReference type="EnsemblFungi" id="BAE55786">
    <property type="protein sequence ID" value="BAE55786"/>
    <property type="gene ID" value="AO090005000760"/>
</dbReference>
<dbReference type="GeneID" id="5989733"/>
<dbReference type="KEGG" id="aor:AO090005000760"/>
<dbReference type="VEuPathDB" id="FungiDB:AO090005000760"/>
<dbReference type="HOGENOM" id="CLU_008658_3_0_1"/>
<dbReference type="OMA" id="FPPHYAE"/>
<dbReference type="OrthoDB" id="22975at5052"/>
<dbReference type="Proteomes" id="UP000006564">
    <property type="component" value="Chromosome 1"/>
</dbReference>
<dbReference type="GO" id="GO:0030127">
    <property type="term" value="C:COPII vesicle coat"/>
    <property type="evidence" value="ECO:0007669"/>
    <property type="project" value="InterPro"/>
</dbReference>
<dbReference type="GO" id="GO:0070971">
    <property type="term" value="C:endoplasmic reticulum exit site"/>
    <property type="evidence" value="ECO:0007669"/>
    <property type="project" value="TreeGrafter"/>
</dbReference>
<dbReference type="GO" id="GO:0005789">
    <property type="term" value="C:endoplasmic reticulum membrane"/>
    <property type="evidence" value="ECO:0007669"/>
    <property type="project" value="UniProtKB-SubCell"/>
</dbReference>
<dbReference type="GO" id="GO:0000139">
    <property type="term" value="C:Golgi membrane"/>
    <property type="evidence" value="ECO:0007669"/>
    <property type="project" value="UniProtKB-SubCell"/>
</dbReference>
<dbReference type="GO" id="GO:0005096">
    <property type="term" value="F:GTPase activator activity"/>
    <property type="evidence" value="ECO:0007669"/>
    <property type="project" value="TreeGrafter"/>
</dbReference>
<dbReference type="GO" id="GO:0008270">
    <property type="term" value="F:zinc ion binding"/>
    <property type="evidence" value="ECO:0007669"/>
    <property type="project" value="InterPro"/>
</dbReference>
<dbReference type="GO" id="GO:0090110">
    <property type="term" value="P:COPII-coated vesicle cargo loading"/>
    <property type="evidence" value="ECO:0007669"/>
    <property type="project" value="TreeGrafter"/>
</dbReference>
<dbReference type="GO" id="GO:0006886">
    <property type="term" value="P:intracellular protein transport"/>
    <property type="evidence" value="ECO:0007669"/>
    <property type="project" value="InterPro"/>
</dbReference>
<dbReference type="CDD" id="cd01478">
    <property type="entry name" value="Sec23-like"/>
    <property type="match status" value="1"/>
</dbReference>
<dbReference type="CDD" id="cd11287">
    <property type="entry name" value="Sec23_C"/>
    <property type="match status" value="1"/>
</dbReference>
<dbReference type="FunFam" id="1.20.120.730:FF:000001">
    <property type="entry name" value="Protein transport protein SEC23"/>
    <property type="match status" value="1"/>
</dbReference>
<dbReference type="FunFam" id="2.30.30.380:FF:000001">
    <property type="entry name" value="Protein transport protein SEC23"/>
    <property type="match status" value="1"/>
</dbReference>
<dbReference type="FunFam" id="3.40.20.10:FF:000006">
    <property type="entry name" value="Protein transport protein SEC23"/>
    <property type="match status" value="1"/>
</dbReference>
<dbReference type="FunFam" id="3.40.50.410:FF:000008">
    <property type="entry name" value="Protein transport protein SEC23"/>
    <property type="match status" value="1"/>
</dbReference>
<dbReference type="Gene3D" id="2.60.40.1670">
    <property type="entry name" value="beta-sandwich domain of Sec23/24"/>
    <property type="match status" value="1"/>
</dbReference>
<dbReference type="Gene3D" id="1.20.120.730">
    <property type="entry name" value="Sec23/Sec24 helical domain"/>
    <property type="match status" value="1"/>
</dbReference>
<dbReference type="Gene3D" id="3.40.20.10">
    <property type="entry name" value="Severin"/>
    <property type="match status" value="1"/>
</dbReference>
<dbReference type="Gene3D" id="3.40.50.410">
    <property type="entry name" value="von Willebrand factor, type A domain"/>
    <property type="match status" value="1"/>
</dbReference>
<dbReference type="Gene3D" id="2.30.30.380">
    <property type="entry name" value="Zn-finger domain of Sec23/24"/>
    <property type="match status" value="1"/>
</dbReference>
<dbReference type="InterPro" id="IPR029006">
    <property type="entry name" value="ADF-H/Gelsolin-like_dom_sf"/>
</dbReference>
<dbReference type="InterPro" id="IPR007123">
    <property type="entry name" value="Gelsolin-like_dom"/>
</dbReference>
<dbReference type="InterPro" id="IPR036180">
    <property type="entry name" value="Gelsolin-like_dom_sf"/>
</dbReference>
<dbReference type="InterPro" id="IPR037364">
    <property type="entry name" value="Sec23"/>
</dbReference>
<dbReference type="InterPro" id="IPR006900">
    <property type="entry name" value="Sec23/24_helical_dom"/>
</dbReference>
<dbReference type="InterPro" id="IPR036175">
    <property type="entry name" value="Sec23/24_helical_dom_sf"/>
</dbReference>
<dbReference type="InterPro" id="IPR006896">
    <property type="entry name" value="Sec23/24_trunk_dom"/>
</dbReference>
<dbReference type="InterPro" id="IPR012990">
    <property type="entry name" value="Sec23_24_beta_S"/>
</dbReference>
<dbReference type="InterPro" id="IPR037550">
    <property type="entry name" value="Sec23_C"/>
</dbReference>
<dbReference type="InterPro" id="IPR036465">
    <property type="entry name" value="vWFA_dom_sf"/>
</dbReference>
<dbReference type="InterPro" id="IPR006895">
    <property type="entry name" value="Znf_Sec23_Sec24"/>
</dbReference>
<dbReference type="InterPro" id="IPR036174">
    <property type="entry name" value="Znf_Sec23_Sec24_sf"/>
</dbReference>
<dbReference type="PANTHER" id="PTHR11141">
    <property type="entry name" value="PROTEIN TRANSPORT PROTEIN SEC23"/>
    <property type="match status" value="1"/>
</dbReference>
<dbReference type="PANTHER" id="PTHR11141:SF0">
    <property type="entry name" value="PROTEIN TRANSPORT PROTEIN SEC23"/>
    <property type="match status" value="1"/>
</dbReference>
<dbReference type="Pfam" id="PF00626">
    <property type="entry name" value="Gelsolin"/>
    <property type="match status" value="1"/>
</dbReference>
<dbReference type="Pfam" id="PF08033">
    <property type="entry name" value="Sec23_BS"/>
    <property type="match status" value="1"/>
</dbReference>
<dbReference type="Pfam" id="PF04815">
    <property type="entry name" value="Sec23_helical"/>
    <property type="match status" value="1"/>
</dbReference>
<dbReference type="Pfam" id="PF04811">
    <property type="entry name" value="Sec23_trunk"/>
    <property type="match status" value="1"/>
</dbReference>
<dbReference type="Pfam" id="PF04810">
    <property type="entry name" value="zf-Sec23_Sec24"/>
    <property type="match status" value="1"/>
</dbReference>
<dbReference type="SUPFAM" id="SSF81995">
    <property type="entry name" value="beta-sandwich domain of Sec23/24"/>
    <property type="match status" value="1"/>
</dbReference>
<dbReference type="SUPFAM" id="SSF82754">
    <property type="entry name" value="C-terminal, gelsolin-like domain of Sec23/24"/>
    <property type="match status" value="1"/>
</dbReference>
<dbReference type="SUPFAM" id="SSF81811">
    <property type="entry name" value="Helical domain of Sec23/24"/>
    <property type="match status" value="1"/>
</dbReference>
<dbReference type="SUPFAM" id="SSF53300">
    <property type="entry name" value="vWA-like"/>
    <property type="match status" value="1"/>
</dbReference>
<dbReference type="SUPFAM" id="SSF82919">
    <property type="entry name" value="Zn-finger domain of Sec23/24"/>
    <property type="match status" value="1"/>
</dbReference>
<gene>
    <name type="primary">sec23</name>
    <name type="ORF">AO090005000760</name>
</gene>
<organism>
    <name type="scientific">Aspergillus oryzae (strain ATCC 42149 / RIB 40)</name>
    <name type="common">Yellow koji mold</name>
    <dbReference type="NCBI Taxonomy" id="510516"/>
    <lineage>
        <taxon>Eukaryota</taxon>
        <taxon>Fungi</taxon>
        <taxon>Dikarya</taxon>
        <taxon>Ascomycota</taxon>
        <taxon>Pezizomycotina</taxon>
        <taxon>Eurotiomycetes</taxon>
        <taxon>Eurotiomycetidae</taxon>
        <taxon>Eurotiales</taxon>
        <taxon>Aspergillaceae</taxon>
        <taxon>Aspergillus</taxon>
        <taxon>Aspergillus subgen. Circumdati</taxon>
    </lineage>
</organism>
<sequence length="769" mass="85572">MDYEALKDQWSDVEDRDGIRLSWNTFPSSRMEASRLVVPIGAVYTPLKDKPDSPLLQYEPVTCKAPCRAVLNPYANVDVRARIWICPFCLMRNPLPPHYKDITESTIPPELHPLSTTIEYQLARPAPTPPIFVYVVDTCQEEDSLKALKDTLVMSLSLLPANALVGLITYGTMAQVHELGYTECAKSYVFRGSKEYAAKQVQEMLGLLSAGVRPNMPQQPARPPLGPAARFLLPVQQAEFQITNVLEQLQRDPWPVANDKRPLRCTGVALSVAVGLLETSFQNAGGRIMVFTSGPATEGPGHVVGPELKEPMRSHHDIDRDNIKYYKKAVKFYDAMAKRAANNGHIVDVFAGCLDQVGLLEMKNLVNYTGGHMLLTDSFTSSQFKQSFVRIFDKDANDNLLMGFNASLEVLTTKELKVTGLIGHAVSLNKKSSSVGETECGIGNTCAWKMCGIDPSSSYGVYFEIANQGGPAAVQPGPQRGMMQFLTYYQHSSGHYHLRVTTVARNLSGPAGDPTLAQSFDQEAAAVLMARIAVFKAEVDDGPDVLRWVDRMLIRLCSRFADYRKDDPTSFRLEKNFTLYPQFMFHLRRSQFLQFFNNSPDETAFYRHVLNHEDVGDSLVMIQPTLDSYSLEHEGSQPVLLDSASIQPSHILLLDTFFHILIFHGETIAEWRKAGYQDQEGYENLKALLEQPKEDARELISDRFPLPRFIVCDAGGSQARFLLSKLNPSTTHTTGGYGGGVTSQTIFTDDVSLQTFMDHLMKLAVSGTS</sequence>
<reference key="1">
    <citation type="journal article" date="2005" name="Nature">
        <title>Genome sequencing and analysis of Aspergillus oryzae.</title>
        <authorList>
            <person name="Machida M."/>
            <person name="Asai K."/>
            <person name="Sano M."/>
            <person name="Tanaka T."/>
            <person name="Kumagai T."/>
            <person name="Terai G."/>
            <person name="Kusumoto K."/>
            <person name="Arima T."/>
            <person name="Akita O."/>
            <person name="Kashiwagi Y."/>
            <person name="Abe K."/>
            <person name="Gomi K."/>
            <person name="Horiuchi H."/>
            <person name="Kitamoto K."/>
            <person name="Kobayashi T."/>
            <person name="Takeuchi M."/>
            <person name="Denning D.W."/>
            <person name="Galagan J.E."/>
            <person name="Nierman W.C."/>
            <person name="Yu J."/>
            <person name="Archer D.B."/>
            <person name="Bennett J.W."/>
            <person name="Bhatnagar D."/>
            <person name="Cleveland T.E."/>
            <person name="Fedorova N.D."/>
            <person name="Gotoh O."/>
            <person name="Horikawa H."/>
            <person name="Hosoyama A."/>
            <person name="Ichinomiya M."/>
            <person name="Igarashi R."/>
            <person name="Iwashita K."/>
            <person name="Juvvadi P.R."/>
            <person name="Kato M."/>
            <person name="Kato Y."/>
            <person name="Kin T."/>
            <person name="Kokubun A."/>
            <person name="Maeda H."/>
            <person name="Maeyama N."/>
            <person name="Maruyama J."/>
            <person name="Nagasaki H."/>
            <person name="Nakajima T."/>
            <person name="Oda K."/>
            <person name="Okada K."/>
            <person name="Paulsen I."/>
            <person name="Sakamoto K."/>
            <person name="Sawano T."/>
            <person name="Takahashi M."/>
            <person name="Takase K."/>
            <person name="Terabayashi Y."/>
            <person name="Wortman J.R."/>
            <person name="Yamada O."/>
            <person name="Yamagata Y."/>
            <person name="Anazawa H."/>
            <person name="Hata Y."/>
            <person name="Koide Y."/>
            <person name="Komori T."/>
            <person name="Koyama Y."/>
            <person name="Minetoki T."/>
            <person name="Suharnan S."/>
            <person name="Tanaka A."/>
            <person name="Isono K."/>
            <person name="Kuhara S."/>
            <person name="Ogasawara N."/>
            <person name="Kikuchi H."/>
        </authorList>
    </citation>
    <scope>NUCLEOTIDE SEQUENCE [LARGE SCALE GENOMIC DNA]</scope>
    <source>
        <strain>ATCC 42149 / RIB 40</strain>
    </source>
</reference>
<accession>Q2URM9</accession>
<evidence type="ECO:0000250" key="1"/>
<evidence type="ECO:0000305" key="2"/>
<feature type="chain" id="PRO_0000295453" description="Protein transport protein sec23">
    <location>
        <begin position="1"/>
        <end position="769"/>
    </location>
</feature>
<feature type="binding site" evidence="1">
    <location>
        <position position="63"/>
    </location>
    <ligand>
        <name>Zn(2+)</name>
        <dbReference type="ChEBI" id="CHEBI:29105"/>
    </ligand>
</feature>
<feature type="binding site" evidence="1">
    <location>
        <position position="67"/>
    </location>
    <ligand>
        <name>Zn(2+)</name>
        <dbReference type="ChEBI" id="CHEBI:29105"/>
    </ligand>
</feature>
<feature type="binding site" evidence="1">
    <location>
        <position position="86"/>
    </location>
    <ligand>
        <name>Zn(2+)</name>
        <dbReference type="ChEBI" id="CHEBI:29105"/>
    </ligand>
</feature>
<feature type="binding site" evidence="1">
    <location>
        <position position="89"/>
    </location>
    <ligand>
        <name>Zn(2+)</name>
        <dbReference type="ChEBI" id="CHEBI:29105"/>
    </ligand>
</feature>
<protein>
    <recommendedName>
        <fullName>Protein transport protein sec23</fullName>
    </recommendedName>
</protein>
<comment type="function">
    <text evidence="1">Component of the coat protein complex II (COPII) which promotes the formation of transport vesicles from the endoplasmic reticulum (ER). The coat has two main functions, the physical deformation of the endoplasmic reticulum membrane into vesicles and the selection of cargo molecules (By similarity).</text>
</comment>
<comment type="subunit">
    <text evidence="1">The COPII coat is composed of at least 5 proteins: the sec23/24 complex, the sec13/31 complex, and the protein sar1.</text>
</comment>
<comment type="subcellular location">
    <subcellularLocation>
        <location evidence="1">Cytoplasm</location>
    </subcellularLocation>
    <subcellularLocation>
        <location evidence="1">Cytoplasmic vesicle</location>
        <location evidence="1">COPII-coated vesicle membrane</location>
        <topology evidence="1">Peripheral membrane protein</topology>
        <orientation evidence="1">Cytoplasmic side</orientation>
    </subcellularLocation>
    <subcellularLocation>
        <location evidence="1">Endoplasmic reticulum membrane</location>
        <topology evidence="1">Peripheral membrane protein</topology>
        <orientation evidence="1">Cytoplasmic side</orientation>
    </subcellularLocation>
    <subcellularLocation>
        <location evidence="1">Golgi apparatus membrane</location>
        <topology evidence="1">Peripheral membrane protein</topology>
        <orientation evidence="1">Cytoplasmic side</orientation>
    </subcellularLocation>
</comment>
<comment type="similarity">
    <text evidence="2">Belongs to the SEC23/SEC24 family. SEC23 subfamily.</text>
</comment>
<name>SEC23_ASPOR</name>
<keyword id="KW-0963">Cytoplasm</keyword>
<keyword id="KW-0968">Cytoplasmic vesicle</keyword>
<keyword id="KW-0256">Endoplasmic reticulum</keyword>
<keyword id="KW-0931">ER-Golgi transport</keyword>
<keyword id="KW-0333">Golgi apparatus</keyword>
<keyword id="KW-0472">Membrane</keyword>
<keyword id="KW-0479">Metal-binding</keyword>
<keyword id="KW-0653">Protein transport</keyword>
<keyword id="KW-1185">Reference proteome</keyword>
<keyword id="KW-0813">Transport</keyword>
<keyword id="KW-0862">Zinc</keyword>
<proteinExistence type="inferred from homology"/>